<keyword id="KW-0133">Cell shape</keyword>
<keyword id="KW-0961">Cell wall biogenesis/degradation</keyword>
<keyword id="KW-0413">Isomerase</keyword>
<keyword id="KW-0573">Peptidoglycan synthesis</keyword>
<keyword id="KW-1185">Reference proteome</keyword>
<evidence type="ECO:0000255" key="1">
    <source>
        <dbReference type="HAMAP-Rule" id="MF_00258"/>
    </source>
</evidence>
<accession>P9WPW8</accession>
<accession>L0T6C6</accession>
<accession>P63635</accession>
<accession>Q10626</accession>
<comment type="function">
    <text evidence="1">Provides the (R)-glutamate required for cell wall biosynthesis.</text>
</comment>
<comment type="catalytic activity">
    <reaction evidence="1">
        <text>L-glutamate = D-glutamate</text>
        <dbReference type="Rhea" id="RHEA:12813"/>
        <dbReference type="ChEBI" id="CHEBI:29985"/>
        <dbReference type="ChEBI" id="CHEBI:29986"/>
        <dbReference type="EC" id="5.1.1.3"/>
    </reaction>
</comment>
<comment type="pathway">
    <text evidence="1">Cell wall biogenesis; peptidoglycan biosynthesis.</text>
</comment>
<comment type="similarity">
    <text evidence="1">Belongs to the aspartate/glutamate racemases family.</text>
</comment>
<organism>
    <name type="scientific">Mycobacterium tuberculosis (strain CDC 1551 / Oshkosh)</name>
    <dbReference type="NCBI Taxonomy" id="83331"/>
    <lineage>
        <taxon>Bacteria</taxon>
        <taxon>Bacillati</taxon>
        <taxon>Actinomycetota</taxon>
        <taxon>Actinomycetes</taxon>
        <taxon>Mycobacteriales</taxon>
        <taxon>Mycobacteriaceae</taxon>
        <taxon>Mycobacterium</taxon>
        <taxon>Mycobacterium tuberculosis complex</taxon>
    </lineage>
</organism>
<protein>
    <recommendedName>
        <fullName evidence="1">Glutamate racemase</fullName>
        <ecNumber evidence="1">5.1.1.3</ecNumber>
    </recommendedName>
</protein>
<proteinExistence type="inferred from homology"/>
<gene>
    <name evidence="1" type="primary">murI</name>
    <name type="ordered locus">MT1379</name>
</gene>
<name>MURI_MYCTO</name>
<feature type="chain" id="PRO_0000426879" description="Glutamate racemase">
    <location>
        <begin position="1"/>
        <end position="271"/>
    </location>
</feature>
<feature type="active site" description="Proton donor/acceptor" evidence="1">
    <location>
        <position position="75"/>
    </location>
</feature>
<feature type="active site" description="Proton donor/acceptor" evidence="1">
    <location>
        <position position="185"/>
    </location>
</feature>
<feature type="binding site" evidence="1">
    <location>
        <begin position="12"/>
        <end position="13"/>
    </location>
    <ligand>
        <name>substrate</name>
    </ligand>
</feature>
<feature type="binding site" evidence="1">
    <location>
        <begin position="44"/>
        <end position="45"/>
    </location>
    <ligand>
        <name>substrate</name>
    </ligand>
</feature>
<feature type="binding site" evidence="1">
    <location>
        <begin position="76"/>
        <end position="77"/>
    </location>
    <ligand>
        <name>substrate</name>
    </ligand>
</feature>
<feature type="binding site" evidence="1">
    <location>
        <begin position="186"/>
        <end position="187"/>
    </location>
    <ligand>
        <name>substrate</name>
    </ligand>
</feature>
<reference key="1">
    <citation type="journal article" date="2002" name="J. Bacteriol.">
        <title>Whole-genome comparison of Mycobacterium tuberculosis clinical and laboratory strains.</title>
        <authorList>
            <person name="Fleischmann R.D."/>
            <person name="Alland D."/>
            <person name="Eisen J.A."/>
            <person name="Carpenter L."/>
            <person name="White O."/>
            <person name="Peterson J.D."/>
            <person name="DeBoy R.T."/>
            <person name="Dodson R.J."/>
            <person name="Gwinn M.L."/>
            <person name="Haft D.H."/>
            <person name="Hickey E.K."/>
            <person name="Kolonay J.F."/>
            <person name="Nelson W.C."/>
            <person name="Umayam L.A."/>
            <person name="Ermolaeva M.D."/>
            <person name="Salzberg S.L."/>
            <person name="Delcher A."/>
            <person name="Utterback T.R."/>
            <person name="Weidman J.F."/>
            <person name="Khouri H.M."/>
            <person name="Gill J."/>
            <person name="Mikula A."/>
            <person name="Bishai W."/>
            <person name="Jacobs W.R. Jr."/>
            <person name="Venter J.C."/>
            <person name="Fraser C.M."/>
        </authorList>
    </citation>
    <scope>NUCLEOTIDE SEQUENCE [LARGE SCALE GENOMIC DNA]</scope>
    <source>
        <strain>CDC 1551 / Oshkosh</strain>
    </source>
</reference>
<dbReference type="EC" id="5.1.1.3" evidence="1"/>
<dbReference type="EMBL" id="AE000516">
    <property type="protein sequence ID" value="AAK45644.1"/>
    <property type="molecule type" value="Genomic_DNA"/>
</dbReference>
<dbReference type="PIR" id="F70771">
    <property type="entry name" value="F70771"/>
</dbReference>
<dbReference type="RefSeq" id="WP_003406919.1">
    <property type="nucleotide sequence ID" value="NZ_KK341227.1"/>
</dbReference>
<dbReference type="SMR" id="P9WPW8"/>
<dbReference type="KEGG" id="mtc:MT1379"/>
<dbReference type="PATRIC" id="fig|83331.31.peg.1487"/>
<dbReference type="HOGENOM" id="CLU_052344_0_1_11"/>
<dbReference type="UniPathway" id="UPA00219"/>
<dbReference type="Proteomes" id="UP000001020">
    <property type="component" value="Chromosome"/>
</dbReference>
<dbReference type="GO" id="GO:0008881">
    <property type="term" value="F:glutamate racemase activity"/>
    <property type="evidence" value="ECO:0007669"/>
    <property type="project" value="UniProtKB-UniRule"/>
</dbReference>
<dbReference type="GO" id="GO:0071555">
    <property type="term" value="P:cell wall organization"/>
    <property type="evidence" value="ECO:0007669"/>
    <property type="project" value="UniProtKB-KW"/>
</dbReference>
<dbReference type="GO" id="GO:0009252">
    <property type="term" value="P:peptidoglycan biosynthetic process"/>
    <property type="evidence" value="ECO:0007669"/>
    <property type="project" value="UniProtKB-UniRule"/>
</dbReference>
<dbReference type="GO" id="GO:0008360">
    <property type="term" value="P:regulation of cell shape"/>
    <property type="evidence" value="ECO:0007669"/>
    <property type="project" value="UniProtKB-KW"/>
</dbReference>
<dbReference type="FunFam" id="3.40.50.1860:FF:000001">
    <property type="entry name" value="Glutamate racemase"/>
    <property type="match status" value="1"/>
</dbReference>
<dbReference type="Gene3D" id="3.40.50.1860">
    <property type="match status" value="2"/>
</dbReference>
<dbReference type="HAMAP" id="MF_00258">
    <property type="entry name" value="Glu_racemase"/>
    <property type="match status" value="1"/>
</dbReference>
<dbReference type="InterPro" id="IPR015942">
    <property type="entry name" value="Asp/Glu/hydantoin_racemase"/>
</dbReference>
<dbReference type="InterPro" id="IPR001920">
    <property type="entry name" value="Asp/Glu_race"/>
</dbReference>
<dbReference type="InterPro" id="IPR018187">
    <property type="entry name" value="Asp/Glu_racemase_AS_1"/>
</dbReference>
<dbReference type="InterPro" id="IPR033134">
    <property type="entry name" value="Asp/Glu_racemase_AS_2"/>
</dbReference>
<dbReference type="InterPro" id="IPR004391">
    <property type="entry name" value="Glu_race"/>
</dbReference>
<dbReference type="NCBIfam" id="TIGR00067">
    <property type="entry name" value="glut_race"/>
    <property type="match status" value="1"/>
</dbReference>
<dbReference type="PANTHER" id="PTHR21198">
    <property type="entry name" value="GLUTAMATE RACEMASE"/>
    <property type="match status" value="1"/>
</dbReference>
<dbReference type="PANTHER" id="PTHR21198:SF2">
    <property type="entry name" value="GLUTAMATE RACEMASE"/>
    <property type="match status" value="1"/>
</dbReference>
<dbReference type="Pfam" id="PF01177">
    <property type="entry name" value="Asp_Glu_race"/>
    <property type="match status" value="1"/>
</dbReference>
<dbReference type="SUPFAM" id="SSF53681">
    <property type="entry name" value="Aspartate/glutamate racemase"/>
    <property type="match status" value="2"/>
</dbReference>
<dbReference type="PROSITE" id="PS00923">
    <property type="entry name" value="ASP_GLU_RACEMASE_1"/>
    <property type="match status" value="1"/>
</dbReference>
<dbReference type="PROSITE" id="PS00924">
    <property type="entry name" value="ASP_GLU_RACEMASE_2"/>
    <property type="match status" value="1"/>
</dbReference>
<sequence>MNSPLAPVGVFDSGVGGLTVARAIIDQLPDEDIVYVGDTGNGPYGPLTIPEIRAHALAIGDDLVGRGVKALVIACNSASSACLRDARERYQVPVVEVILPAVRRAVAATRNGRIGVIGTRATITSHAYQDAFAAARDTEITAVACPRFVDFVERGVTSGRQVLGLAQGYLEPLQRAEVDTLVLGCTHYPLLSGLIQLAMGENVTLVSSAEETAKEVVRVLTEIDLLRPHDAPPATRIFEATGDPEAFTKLAARFLGPVLGGVQPVHPSRIH</sequence>